<gene>
    <name type="primary">Aar2</name>
</gene>
<proteinExistence type="evidence at protein level"/>
<reference key="1">
    <citation type="journal article" date="2005" name="Science">
        <title>The transcriptional landscape of the mammalian genome.</title>
        <authorList>
            <person name="Carninci P."/>
            <person name="Kasukawa T."/>
            <person name="Katayama S."/>
            <person name="Gough J."/>
            <person name="Frith M.C."/>
            <person name="Maeda N."/>
            <person name="Oyama R."/>
            <person name="Ravasi T."/>
            <person name="Lenhard B."/>
            <person name="Wells C."/>
            <person name="Kodzius R."/>
            <person name="Shimokawa K."/>
            <person name="Bajic V.B."/>
            <person name="Brenner S.E."/>
            <person name="Batalov S."/>
            <person name="Forrest A.R."/>
            <person name="Zavolan M."/>
            <person name="Davis M.J."/>
            <person name="Wilming L.G."/>
            <person name="Aidinis V."/>
            <person name="Allen J.E."/>
            <person name="Ambesi-Impiombato A."/>
            <person name="Apweiler R."/>
            <person name="Aturaliya R.N."/>
            <person name="Bailey T.L."/>
            <person name="Bansal M."/>
            <person name="Baxter L."/>
            <person name="Beisel K.W."/>
            <person name="Bersano T."/>
            <person name="Bono H."/>
            <person name="Chalk A.M."/>
            <person name="Chiu K.P."/>
            <person name="Choudhary V."/>
            <person name="Christoffels A."/>
            <person name="Clutterbuck D.R."/>
            <person name="Crowe M.L."/>
            <person name="Dalla E."/>
            <person name="Dalrymple B.P."/>
            <person name="de Bono B."/>
            <person name="Della Gatta G."/>
            <person name="di Bernardo D."/>
            <person name="Down T."/>
            <person name="Engstrom P."/>
            <person name="Fagiolini M."/>
            <person name="Faulkner G."/>
            <person name="Fletcher C.F."/>
            <person name="Fukushima T."/>
            <person name="Furuno M."/>
            <person name="Futaki S."/>
            <person name="Gariboldi M."/>
            <person name="Georgii-Hemming P."/>
            <person name="Gingeras T.R."/>
            <person name="Gojobori T."/>
            <person name="Green R.E."/>
            <person name="Gustincich S."/>
            <person name="Harbers M."/>
            <person name="Hayashi Y."/>
            <person name="Hensch T.K."/>
            <person name="Hirokawa N."/>
            <person name="Hill D."/>
            <person name="Huminiecki L."/>
            <person name="Iacono M."/>
            <person name="Ikeo K."/>
            <person name="Iwama A."/>
            <person name="Ishikawa T."/>
            <person name="Jakt M."/>
            <person name="Kanapin A."/>
            <person name="Katoh M."/>
            <person name="Kawasawa Y."/>
            <person name="Kelso J."/>
            <person name="Kitamura H."/>
            <person name="Kitano H."/>
            <person name="Kollias G."/>
            <person name="Krishnan S.P."/>
            <person name="Kruger A."/>
            <person name="Kummerfeld S.K."/>
            <person name="Kurochkin I.V."/>
            <person name="Lareau L.F."/>
            <person name="Lazarevic D."/>
            <person name="Lipovich L."/>
            <person name="Liu J."/>
            <person name="Liuni S."/>
            <person name="McWilliam S."/>
            <person name="Madan Babu M."/>
            <person name="Madera M."/>
            <person name="Marchionni L."/>
            <person name="Matsuda H."/>
            <person name="Matsuzawa S."/>
            <person name="Miki H."/>
            <person name="Mignone F."/>
            <person name="Miyake S."/>
            <person name="Morris K."/>
            <person name="Mottagui-Tabar S."/>
            <person name="Mulder N."/>
            <person name="Nakano N."/>
            <person name="Nakauchi H."/>
            <person name="Ng P."/>
            <person name="Nilsson R."/>
            <person name="Nishiguchi S."/>
            <person name="Nishikawa S."/>
            <person name="Nori F."/>
            <person name="Ohara O."/>
            <person name="Okazaki Y."/>
            <person name="Orlando V."/>
            <person name="Pang K.C."/>
            <person name="Pavan W.J."/>
            <person name="Pavesi G."/>
            <person name="Pesole G."/>
            <person name="Petrovsky N."/>
            <person name="Piazza S."/>
            <person name="Reed J."/>
            <person name="Reid J.F."/>
            <person name="Ring B.Z."/>
            <person name="Ringwald M."/>
            <person name="Rost B."/>
            <person name="Ruan Y."/>
            <person name="Salzberg S.L."/>
            <person name="Sandelin A."/>
            <person name="Schneider C."/>
            <person name="Schoenbach C."/>
            <person name="Sekiguchi K."/>
            <person name="Semple C.A."/>
            <person name="Seno S."/>
            <person name="Sessa L."/>
            <person name="Sheng Y."/>
            <person name="Shibata Y."/>
            <person name="Shimada H."/>
            <person name="Shimada K."/>
            <person name="Silva D."/>
            <person name="Sinclair B."/>
            <person name="Sperling S."/>
            <person name="Stupka E."/>
            <person name="Sugiura K."/>
            <person name="Sultana R."/>
            <person name="Takenaka Y."/>
            <person name="Taki K."/>
            <person name="Tammoja K."/>
            <person name="Tan S.L."/>
            <person name="Tang S."/>
            <person name="Taylor M.S."/>
            <person name="Tegner J."/>
            <person name="Teichmann S.A."/>
            <person name="Ueda H.R."/>
            <person name="van Nimwegen E."/>
            <person name="Verardo R."/>
            <person name="Wei C.L."/>
            <person name="Yagi K."/>
            <person name="Yamanishi H."/>
            <person name="Zabarovsky E."/>
            <person name="Zhu S."/>
            <person name="Zimmer A."/>
            <person name="Hide W."/>
            <person name="Bult C."/>
            <person name="Grimmond S.M."/>
            <person name="Teasdale R.D."/>
            <person name="Liu E.T."/>
            <person name="Brusic V."/>
            <person name="Quackenbush J."/>
            <person name="Wahlestedt C."/>
            <person name="Mattick J.S."/>
            <person name="Hume D.A."/>
            <person name="Kai C."/>
            <person name="Sasaki D."/>
            <person name="Tomaru Y."/>
            <person name="Fukuda S."/>
            <person name="Kanamori-Katayama M."/>
            <person name="Suzuki M."/>
            <person name="Aoki J."/>
            <person name="Arakawa T."/>
            <person name="Iida J."/>
            <person name="Imamura K."/>
            <person name="Itoh M."/>
            <person name="Kato T."/>
            <person name="Kawaji H."/>
            <person name="Kawagashira N."/>
            <person name="Kawashima T."/>
            <person name="Kojima M."/>
            <person name="Kondo S."/>
            <person name="Konno H."/>
            <person name="Nakano K."/>
            <person name="Ninomiya N."/>
            <person name="Nishio T."/>
            <person name="Okada M."/>
            <person name="Plessy C."/>
            <person name="Shibata K."/>
            <person name="Shiraki T."/>
            <person name="Suzuki S."/>
            <person name="Tagami M."/>
            <person name="Waki K."/>
            <person name="Watahiki A."/>
            <person name="Okamura-Oho Y."/>
            <person name="Suzuki H."/>
            <person name="Kawai J."/>
            <person name="Hayashizaki Y."/>
        </authorList>
    </citation>
    <scope>NUCLEOTIDE SEQUENCE [LARGE SCALE MRNA]</scope>
    <source>
        <strain>C57BL/6J</strain>
        <tissue>Kidney</tissue>
        <tissue>Mammary gland</tissue>
        <tissue>Thymus</tissue>
    </source>
</reference>
<reference key="2">
    <citation type="journal article" date="2009" name="PLoS Biol.">
        <title>Lineage-specific biology revealed by a finished genome assembly of the mouse.</title>
        <authorList>
            <person name="Church D.M."/>
            <person name="Goodstadt L."/>
            <person name="Hillier L.W."/>
            <person name="Zody M.C."/>
            <person name="Goldstein S."/>
            <person name="She X."/>
            <person name="Bult C.J."/>
            <person name="Agarwala R."/>
            <person name="Cherry J.L."/>
            <person name="DiCuccio M."/>
            <person name="Hlavina W."/>
            <person name="Kapustin Y."/>
            <person name="Meric P."/>
            <person name="Maglott D."/>
            <person name="Birtle Z."/>
            <person name="Marques A.C."/>
            <person name="Graves T."/>
            <person name="Zhou S."/>
            <person name="Teague B."/>
            <person name="Potamousis K."/>
            <person name="Churas C."/>
            <person name="Place M."/>
            <person name="Herschleb J."/>
            <person name="Runnheim R."/>
            <person name="Forrest D."/>
            <person name="Amos-Landgraf J."/>
            <person name="Schwartz D.C."/>
            <person name="Cheng Z."/>
            <person name="Lindblad-Toh K."/>
            <person name="Eichler E.E."/>
            <person name="Ponting C.P."/>
        </authorList>
    </citation>
    <scope>NUCLEOTIDE SEQUENCE [LARGE SCALE GENOMIC DNA]</scope>
    <source>
        <strain>C57BL/6J</strain>
    </source>
</reference>
<reference key="3">
    <citation type="submission" date="2005-07" db="EMBL/GenBank/DDBJ databases">
        <authorList>
            <person name="Mural R.J."/>
            <person name="Adams M.D."/>
            <person name="Myers E.W."/>
            <person name="Smith H.O."/>
            <person name="Venter J.C."/>
        </authorList>
    </citation>
    <scope>NUCLEOTIDE SEQUENCE [LARGE SCALE GENOMIC DNA]</scope>
</reference>
<reference key="4">
    <citation type="journal article" date="2004" name="Genome Res.">
        <title>The status, quality, and expansion of the NIH full-length cDNA project: the Mammalian Gene Collection (MGC).</title>
        <authorList>
            <consortium name="The MGC Project Team"/>
        </authorList>
    </citation>
    <scope>NUCLEOTIDE SEQUENCE [LARGE SCALE MRNA]</scope>
    <source>
        <tissue>Liver</tissue>
    </source>
</reference>
<reference key="5">
    <citation type="journal article" date="2010" name="Cell">
        <title>A tissue-specific atlas of mouse protein phosphorylation and expression.</title>
        <authorList>
            <person name="Huttlin E.L."/>
            <person name="Jedrychowski M.P."/>
            <person name="Elias J.E."/>
            <person name="Goswami T."/>
            <person name="Rad R."/>
            <person name="Beausoleil S.A."/>
            <person name="Villen J."/>
            <person name="Haas W."/>
            <person name="Sowa M.E."/>
            <person name="Gygi S.P."/>
        </authorList>
    </citation>
    <scope>IDENTIFICATION BY MASS SPECTROMETRY [LARGE SCALE ANALYSIS]</scope>
    <source>
        <tissue>Spleen</tissue>
        <tissue>Testis</tissue>
    </source>
</reference>
<keyword id="KW-0507">mRNA processing</keyword>
<keyword id="KW-0508">mRNA splicing</keyword>
<keyword id="KW-1185">Reference proteome</keyword>
<keyword id="KW-0747">Spliceosome</keyword>
<name>AAR2_MOUSE</name>
<sequence length="384" mass="43408">MSSMQMDPELAKQLFFEGATVVILNMPKGTEFGIDYNSWEVGPKFRGVKMIPPGIHFLYYSSVDKANPREVGPRMGFFLSLKQRGLTVLRWNAVQEEVDLSPAPEAEVEAMRANLPDLDQFLGPYPYATLKKWISLTNFISEATMEKLQPESRQICAFSDVLPVLFMKHTKDRVGQNLPLCGTECRSYQEGLARLPEMRPRAGTEIRFSELPTQMFPAGATPAEITRHSMDLSYALETVLSKQFPGNPQDVLGELQFAFVCFLLGNVYEAFEHWKRLLNLLCRSESAMGKYHALYISLISILYHQLGEIPADFFVDIVSQDNFLTSTLQVFFSSACSIAVEATLRKKAEKFQAHLTKKFRWDFTSEPEDCAPVVVELPEGIETA</sequence>
<accession>Q9D2V5</accession>
<accession>Q3TEN8</accession>
<accession>Q3TM16</accession>
<accession>Q8VBU9</accession>
<organism>
    <name type="scientific">Mus musculus</name>
    <name type="common">Mouse</name>
    <dbReference type="NCBI Taxonomy" id="10090"/>
    <lineage>
        <taxon>Eukaryota</taxon>
        <taxon>Metazoa</taxon>
        <taxon>Chordata</taxon>
        <taxon>Craniata</taxon>
        <taxon>Vertebrata</taxon>
        <taxon>Euteleostomi</taxon>
        <taxon>Mammalia</taxon>
        <taxon>Eutheria</taxon>
        <taxon>Euarchontoglires</taxon>
        <taxon>Glires</taxon>
        <taxon>Rodentia</taxon>
        <taxon>Myomorpha</taxon>
        <taxon>Muroidea</taxon>
        <taxon>Muridae</taxon>
        <taxon>Murinae</taxon>
        <taxon>Mus</taxon>
        <taxon>Mus</taxon>
    </lineage>
</organism>
<comment type="function">
    <text evidence="1">Component of the U5 snRNP complex that is required for spliceosome assembly and for pre-mRNA splicing.</text>
</comment>
<comment type="subunit">
    <text evidence="1 2">Interacts with PRPF8 (via RNase H homology domain) (By similarity). Component of a U5 snRNP complex that contains PRPF8 (By similarity).</text>
</comment>
<comment type="similarity">
    <text evidence="3">Belongs to the AAR2 family.</text>
</comment>
<evidence type="ECO:0000250" key="1">
    <source>
        <dbReference type="UniProtKB" id="P32357"/>
    </source>
</evidence>
<evidence type="ECO:0000250" key="2">
    <source>
        <dbReference type="UniProtKB" id="Q9Y312"/>
    </source>
</evidence>
<evidence type="ECO:0000305" key="3"/>
<protein>
    <recommendedName>
        <fullName>Protein AAR2 homolog</fullName>
    </recommendedName>
    <alternativeName>
        <fullName>AAR2 splicing factor homolog</fullName>
    </alternativeName>
</protein>
<dbReference type="EMBL" id="AK018741">
    <property type="protein sequence ID" value="BAB31382.1"/>
    <property type="molecule type" value="mRNA"/>
</dbReference>
<dbReference type="EMBL" id="AK166203">
    <property type="protein sequence ID" value="BAE38626.1"/>
    <property type="molecule type" value="mRNA"/>
</dbReference>
<dbReference type="EMBL" id="AK169526">
    <property type="protein sequence ID" value="BAE41210.1"/>
    <property type="molecule type" value="mRNA"/>
</dbReference>
<dbReference type="EMBL" id="AL929153">
    <property type="status" value="NOT_ANNOTATED_CDS"/>
    <property type="molecule type" value="Genomic_DNA"/>
</dbReference>
<dbReference type="EMBL" id="CH466551">
    <property type="protein sequence ID" value="EDL06199.1"/>
    <property type="molecule type" value="Genomic_DNA"/>
</dbReference>
<dbReference type="EMBL" id="BC019988">
    <property type="protein sequence ID" value="AAH19988.1"/>
    <property type="molecule type" value="mRNA"/>
</dbReference>
<dbReference type="EMBL" id="BC020112">
    <property type="protein sequence ID" value="AAH20112.1"/>
    <property type="molecule type" value="mRNA"/>
</dbReference>
<dbReference type="CCDS" id="CCDS16967.1"/>
<dbReference type="RefSeq" id="NP_001158290.1">
    <property type="nucleotide sequence ID" value="NM_001164818.1"/>
</dbReference>
<dbReference type="RefSeq" id="NP_080937.3">
    <property type="nucleotide sequence ID" value="NM_026661.4"/>
</dbReference>
<dbReference type="RefSeq" id="XP_006500160.1">
    <property type="nucleotide sequence ID" value="XM_006500097.5"/>
</dbReference>
<dbReference type="SMR" id="Q9D2V5"/>
<dbReference type="FunCoup" id="Q9D2V5">
    <property type="interactions" value="602"/>
</dbReference>
<dbReference type="IntAct" id="Q9D2V5">
    <property type="interactions" value="1"/>
</dbReference>
<dbReference type="MINT" id="Q9D2V5"/>
<dbReference type="STRING" id="10090.ENSMUSP00000029158"/>
<dbReference type="GlyGen" id="Q9D2V5">
    <property type="glycosylation" value="1 site"/>
</dbReference>
<dbReference type="iPTMnet" id="Q9D2V5"/>
<dbReference type="PhosphoSitePlus" id="Q9D2V5"/>
<dbReference type="SwissPalm" id="Q9D2V5"/>
<dbReference type="PaxDb" id="10090-ENSMUSP00000029158"/>
<dbReference type="ProteomicsDB" id="285895"/>
<dbReference type="Pumba" id="Q9D2V5"/>
<dbReference type="Antibodypedia" id="26501">
    <property type="antibodies" value="81 antibodies from 20 providers"/>
</dbReference>
<dbReference type="DNASU" id="68295"/>
<dbReference type="Ensembl" id="ENSMUST00000029158.4">
    <property type="protein sequence ID" value="ENSMUSP00000029158.4"/>
    <property type="gene ID" value="ENSMUSG00000027628.11"/>
</dbReference>
<dbReference type="Ensembl" id="ENSMUST00000109570.8">
    <property type="protein sequence ID" value="ENSMUSP00000105198.2"/>
    <property type="gene ID" value="ENSMUSG00000027628.11"/>
</dbReference>
<dbReference type="GeneID" id="68295"/>
<dbReference type="KEGG" id="mmu:68295"/>
<dbReference type="UCSC" id="uc008nnp.2">
    <property type="organism name" value="mouse"/>
</dbReference>
<dbReference type="AGR" id="MGI:1915545"/>
<dbReference type="CTD" id="25980"/>
<dbReference type="MGI" id="MGI:1915545">
    <property type="gene designation" value="Aar2"/>
</dbReference>
<dbReference type="VEuPathDB" id="HostDB:ENSMUSG00000027628"/>
<dbReference type="eggNOG" id="KOG3937">
    <property type="taxonomic scope" value="Eukaryota"/>
</dbReference>
<dbReference type="GeneTree" id="ENSGT00390000007796"/>
<dbReference type="HOGENOM" id="CLU_036039_0_0_1"/>
<dbReference type="InParanoid" id="Q9D2V5"/>
<dbReference type="OMA" id="CAFSDII"/>
<dbReference type="OrthoDB" id="201752at2759"/>
<dbReference type="PhylomeDB" id="Q9D2V5"/>
<dbReference type="TreeFam" id="TF315089"/>
<dbReference type="BioGRID-ORCS" id="68295">
    <property type="hits" value="9 hits in 76 CRISPR screens"/>
</dbReference>
<dbReference type="ChiTaRS" id="Aar2">
    <property type="organism name" value="mouse"/>
</dbReference>
<dbReference type="PRO" id="PR:Q9D2V5"/>
<dbReference type="Proteomes" id="UP000000589">
    <property type="component" value="Chromosome 2"/>
</dbReference>
<dbReference type="RNAct" id="Q9D2V5">
    <property type="molecule type" value="protein"/>
</dbReference>
<dbReference type="Bgee" id="ENSMUSG00000027628">
    <property type="expression patterns" value="Expressed in spermatocyte and 231 other cell types or tissues"/>
</dbReference>
<dbReference type="ExpressionAtlas" id="Q9D2V5">
    <property type="expression patterns" value="baseline and differential"/>
</dbReference>
<dbReference type="GO" id="GO:0005681">
    <property type="term" value="C:spliceosomal complex"/>
    <property type="evidence" value="ECO:0007669"/>
    <property type="project" value="UniProtKB-KW"/>
</dbReference>
<dbReference type="GO" id="GO:0006397">
    <property type="term" value="P:mRNA processing"/>
    <property type="evidence" value="ECO:0007669"/>
    <property type="project" value="UniProtKB-KW"/>
</dbReference>
<dbReference type="GO" id="GO:0008380">
    <property type="term" value="P:RNA splicing"/>
    <property type="evidence" value="ECO:0007669"/>
    <property type="project" value="UniProtKB-KW"/>
</dbReference>
<dbReference type="CDD" id="cd13778">
    <property type="entry name" value="Aar2_C"/>
    <property type="match status" value="1"/>
</dbReference>
<dbReference type="CDD" id="cd13777">
    <property type="entry name" value="Aar2_N"/>
    <property type="match status" value="1"/>
</dbReference>
<dbReference type="FunFam" id="1.25.40.550:FF:000001">
    <property type="entry name" value="AAR2 splicing factor homolog"/>
    <property type="match status" value="1"/>
</dbReference>
<dbReference type="FunFam" id="2.60.34.20:FF:000001">
    <property type="entry name" value="protein AAR2 homolog"/>
    <property type="match status" value="1"/>
</dbReference>
<dbReference type="Gene3D" id="2.60.34.20">
    <property type="match status" value="1"/>
</dbReference>
<dbReference type="Gene3D" id="1.25.40.550">
    <property type="entry name" value="Aar2, C-terminal domain-like"/>
    <property type="match status" value="1"/>
</dbReference>
<dbReference type="InterPro" id="IPR007946">
    <property type="entry name" value="AAR2"/>
</dbReference>
<dbReference type="InterPro" id="IPR033648">
    <property type="entry name" value="AAR2_C"/>
</dbReference>
<dbReference type="InterPro" id="IPR038514">
    <property type="entry name" value="AAR2_C_sf"/>
</dbReference>
<dbReference type="InterPro" id="IPR033647">
    <property type="entry name" value="Aar2_N"/>
</dbReference>
<dbReference type="InterPro" id="IPR038516">
    <property type="entry name" value="AAR2_N_sf"/>
</dbReference>
<dbReference type="PANTHER" id="PTHR12689">
    <property type="entry name" value="A1 CISTRON SPLICING FACTOR AAR2-RELATED"/>
    <property type="match status" value="1"/>
</dbReference>
<dbReference type="PANTHER" id="PTHR12689:SF4">
    <property type="entry name" value="PROTEIN AAR2 HOMOLOG"/>
    <property type="match status" value="1"/>
</dbReference>
<dbReference type="Pfam" id="PF05282">
    <property type="entry name" value="AAR2"/>
    <property type="match status" value="1"/>
</dbReference>
<dbReference type="Pfam" id="PF20981">
    <property type="entry name" value="AAR2_1st"/>
    <property type="match status" value="1"/>
</dbReference>
<feature type="chain" id="PRO_0000209707" description="Protein AAR2 homolog">
    <location>
        <begin position="1"/>
        <end position="384"/>
    </location>
</feature>
<feature type="sequence conflict" description="In Ref. 1; BAE38626 and 4; AAH19988/AAH20112." evidence="3" ref="1 4">
    <original>F</original>
    <variation>S</variation>
    <location>
        <position position="166"/>
    </location>
</feature>